<name>END4_BACFN</name>
<sequence>MKYIGAHVSASGGVEFAPVNAHEIGANAFALFTKNQRQWVSKPLTEDSIRLFKENCEKFGFAPEYILPHDSYLINLGHPEEEGLTKSRAAFLDEMQRCEQLGLKLLNFHPGSHLNKISVEECLDRIAESINLALEKTKGVTAVIENTAGQGSNLGNEFWQLKYIIDRVEDKSRVGVCLDTCHTFTAGYDFLNDYDDVFGEFGEVVGFEYLRGMHLNDSKKELGSRVDRHDSIGKGLIGFAFFEKLMKDPRFDNMPLILETIDETLWPEEIAWLREQTQ</sequence>
<keyword id="KW-0227">DNA damage</keyword>
<keyword id="KW-0234">DNA repair</keyword>
<keyword id="KW-0255">Endonuclease</keyword>
<keyword id="KW-0378">Hydrolase</keyword>
<keyword id="KW-0479">Metal-binding</keyword>
<keyword id="KW-0540">Nuclease</keyword>
<keyword id="KW-0862">Zinc</keyword>
<comment type="function">
    <text evidence="1">Endonuclease IV plays a role in DNA repair. It cleaves phosphodiester bonds at apurinic or apyrimidinic (AP) sites, generating a 3'-hydroxyl group and a 5'-terminal sugar phosphate.</text>
</comment>
<comment type="catalytic activity">
    <reaction evidence="1">
        <text>Endonucleolytic cleavage to 5'-phosphooligonucleotide end-products.</text>
        <dbReference type="EC" id="3.1.21.2"/>
    </reaction>
</comment>
<comment type="cofactor">
    <cofactor evidence="1">
        <name>Zn(2+)</name>
        <dbReference type="ChEBI" id="CHEBI:29105"/>
    </cofactor>
    <text evidence="1">Binds 3 Zn(2+) ions.</text>
</comment>
<comment type="similarity">
    <text evidence="1">Belongs to the AP endonuclease 2 family.</text>
</comment>
<dbReference type="EC" id="3.1.21.2" evidence="1"/>
<dbReference type="EMBL" id="CR626927">
    <property type="protein sequence ID" value="CAH06913.1"/>
    <property type="molecule type" value="Genomic_DNA"/>
</dbReference>
<dbReference type="RefSeq" id="WP_005795638.1">
    <property type="nucleotide sequence ID" value="NZ_UFTH01000001.1"/>
</dbReference>
<dbReference type="SMR" id="Q5LG28"/>
<dbReference type="PaxDb" id="272559-BF9343_1132"/>
<dbReference type="GeneID" id="60369169"/>
<dbReference type="KEGG" id="bfs:BF9343_1132"/>
<dbReference type="eggNOG" id="COG0648">
    <property type="taxonomic scope" value="Bacteria"/>
</dbReference>
<dbReference type="HOGENOM" id="CLU_025885_0_4_10"/>
<dbReference type="Proteomes" id="UP000006731">
    <property type="component" value="Chromosome"/>
</dbReference>
<dbReference type="GO" id="GO:0008833">
    <property type="term" value="F:deoxyribonuclease IV (phage-T4-induced) activity"/>
    <property type="evidence" value="ECO:0007669"/>
    <property type="project" value="UniProtKB-UniRule"/>
</dbReference>
<dbReference type="GO" id="GO:0003677">
    <property type="term" value="F:DNA binding"/>
    <property type="evidence" value="ECO:0007669"/>
    <property type="project" value="InterPro"/>
</dbReference>
<dbReference type="GO" id="GO:0003906">
    <property type="term" value="F:DNA-(apurinic or apyrimidinic site) endonuclease activity"/>
    <property type="evidence" value="ECO:0007669"/>
    <property type="project" value="TreeGrafter"/>
</dbReference>
<dbReference type="GO" id="GO:0008081">
    <property type="term" value="F:phosphoric diester hydrolase activity"/>
    <property type="evidence" value="ECO:0007669"/>
    <property type="project" value="TreeGrafter"/>
</dbReference>
<dbReference type="GO" id="GO:0008270">
    <property type="term" value="F:zinc ion binding"/>
    <property type="evidence" value="ECO:0007669"/>
    <property type="project" value="UniProtKB-UniRule"/>
</dbReference>
<dbReference type="GO" id="GO:0006284">
    <property type="term" value="P:base-excision repair"/>
    <property type="evidence" value="ECO:0007669"/>
    <property type="project" value="TreeGrafter"/>
</dbReference>
<dbReference type="CDD" id="cd00019">
    <property type="entry name" value="AP2Ec"/>
    <property type="match status" value="1"/>
</dbReference>
<dbReference type="FunFam" id="3.20.20.150:FF:000001">
    <property type="entry name" value="Probable endonuclease 4"/>
    <property type="match status" value="1"/>
</dbReference>
<dbReference type="Gene3D" id="3.20.20.150">
    <property type="entry name" value="Divalent-metal-dependent TIM barrel enzymes"/>
    <property type="match status" value="1"/>
</dbReference>
<dbReference type="HAMAP" id="MF_00152">
    <property type="entry name" value="Nfo"/>
    <property type="match status" value="1"/>
</dbReference>
<dbReference type="InterPro" id="IPR001719">
    <property type="entry name" value="AP_endonuc_2"/>
</dbReference>
<dbReference type="InterPro" id="IPR018246">
    <property type="entry name" value="AP_endonuc_F2_Zn_BS"/>
</dbReference>
<dbReference type="InterPro" id="IPR036237">
    <property type="entry name" value="Xyl_isomerase-like_sf"/>
</dbReference>
<dbReference type="InterPro" id="IPR013022">
    <property type="entry name" value="Xyl_isomerase-like_TIM-brl"/>
</dbReference>
<dbReference type="NCBIfam" id="TIGR00587">
    <property type="entry name" value="nfo"/>
    <property type="match status" value="1"/>
</dbReference>
<dbReference type="NCBIfam" id="NF002199">
    <property type="entry name" value="PRK01060.1-4"/>
    <property type="match status" value="1"/>
</dbReference>
<dbReference type="PANTHER" id="PTHR21445:SF0">
    <property type="entry name" value="APURINIC-APYRIMIDINIC ENDONUCLEASE"/>
    <property type="match status" value="1"/>
</dbReference>
<dbReference type="PANTHER" id="PTHR21445">
    <property type="entry name" value="ENDONUCLEASE IV ENDODEOXYRIBONUCLEASE IV"/>
    <property type="match status" value="1"/>
</dbReference>
<dbReference type="Pfam" id="PF01261">
    <property type="entry name" value="AP_endonuc_2"/>
    <property type="match status" value="1"/>
</dbReference>
<dbReference type="SMART" id="SM00518">
    <property type="entry name" value="AP2Ec"/>
    <property type="match status" value="1"/>
</dbReference>
<dbReference type="SUPFAM" id="SSF51658">
    <property type="entry name" value="Xylose isomerase-like"/>
    <property type="match status" value="1"/>
</dbReference>
<dbReference type="PROSITE" id="PS00729">
    <property type="entry name" value="AP_NUCLEASE_F2_1"/>
    <property type="match status" value="1"/>
</dbReference>
<dbReference type="PROSITE" id="PS00730">
    <property type="entry name" value="AP_NUCLEASE_F2_2"/>
    <property type="match status" value="1"/>
</dbReference>
<dbReference type="PROSITE" id="PS00731">
    <property type="entry name" value="AP_NUCLEASE_F2_3"/>
    <property type="match status" value="1"/>
</dbReference>
<dbReference type="PROSITE" id="PS51432">
    <property type="entry name" value="AP_NUCLEASE_F2_4"/>
    <property type="match status" value="1"/>
</dbReference>
<organism>
    <name type="scientific">Bacteroides fragilis (strain ATCC 25285 / DSM 2151 / CCUG 4856 / JCM 11019 / LMG 10263 / NCTC 9343 / Onslow / VPI 2553 / EN-2)</name>
    <dbReference type="NCBI Taxonomy" id="272559"/>
    <lineage>
        <taxon>Bacteria</taxon>
        <taxon>Pseudomonadati</taxon>
        <taxon>Bacteroidota</taxon>
        <taxon>Bacteroidia</taxon>
        <taxon>Bacteroidales</taxon>
        <taxon>Bacteroidaceae</taxon>
        <taxon>Bacteroides</taxon>
    </lineage>
</organism>
<evidence type="ECO:0000255" key="1">
    <source>
        <dbReference type="HAMAP-Rule" id="MF_00152"/>
    </source>
</evidence>
<feature type="chain" id="PRO_1000011290" description="Probable endonuclease 4">
    <location>
        <begin position="1"/>
        <end position="278"/>
    </location>
</feature>
<feature type="binding site" evidence="1">
    <location>
        <position position="69"/>
    </location>
    <ligand>
        <name>Zn(2+)</name>
        <dbReference type="ChEBI" id="CHEBI:29105"/>
        <label>1</label>
    </ligand>
</feature>
<feature type="binding site" evidence="1">
    <location>
        <position position="109"/>
    </location>
    <ligand>
        <name>Zn(2+)</name>
        <dbReference type="ChEBI" id="CHEBI:29105"/>
        <label>1</label>
    </ligand>
</feature>
<feature type="binding site" evidence="1">
    <location>
        <position position="145"/>
    </location>
    <ligand>
        <name>Zn(2+)</name>
        <dbReference type="ChEBI" id="CHEBI:29105"/>
        <label>1</label>
    </ligand>
</feature>
<feature type="binding site" evidence="1">
    <location>
        <position position="145"/>
    </location>
    <ligand>
        <name>Zn(2+)</name>
        <dbReference type="ChEBI" id="CHEBI:29105"/>
        <label>2</label>
    </ligand>
</feature>
<feature type="binding site" evidence="1">
    <location>
        <position position="179"/>
    </location>
    <ligand>
        <name>Zn(2+)</name>
        <dbReference type="ChEBI" id="CHEBI:29105"/>
        <label>2</label>
    </ligand>
</feature>
<feature type="binding site" evidence="1">
    <location>
        <position position="182"/>
    </location>
    <ligand>
        <name>Zn(2+)</name>
        <dbReference type="ChEBI" id="CHEBI:29105"/>
        <label>3</label>
    </ligand>
</feature>
<feature type="binding site" evidence="1">
    <location>
        <position position="214"/>
    </location>
    <ligand>
        <name>Zn(2+)</name>
        <dbReference type="ChEBI" id="CHEBI:29105"/>
        <label>2</label>
    </ligand>
</feature>
<feature type="binding site" evidence="1">
    <location>
        <position position="227"/>
    </location>
    <ligand>
        <name>Zn(2+)</name>
        <dbReference type="ChEBI" id="CHEBI:29105"/>
        <label>3</label>
    </ligand>
</feature>
<feature type="binding site" evidence="1">
    <location>
        <position position="229"/>
    </location>
    <ligand>
        <name>Zn(2+)</name>
        <dbReference type="ChEBI" id="CHEBI:29105"/>
        <label>3</label>
    </ligand>
</feature>
<feature type="binding site" evidence="1">
    <location>
        <position position="259"/>
    </location>
    <ligand>
        <name>Zn(2+)</name>
        <dbReference type="ChEBI" id="CHEBI:29105"/>
        <label>2</label>
    </ligand>
</feature>
<protein>
    <recommendedName>
        <fullName evidence="1">Probable endonuclease 4</fullName>
        <ecNumber evidence="1">3.1.21.2</ecNumber>
    </recommendedName>
    <alternativeName>
        <fullName evidence="1">Endodeoxyribonuclease IV</fullName>
    </alternativeName>
    <alternativeName>
        <fullName evidence="1">Endonuclease IV</fullName>
    </alternativeName>
</protein>
<accession>Q5LG28</accession>
<reference key="1">
    <citation type="journal article" date="2005" name="Science">
        <title>Extensive DNA inversions in the B. fragilis genome control variable gene expression.</title>
        <authorList>
            <person name="Cerdeno-Tarraga A.-M."/>
            <person name="Patrick S."/>
            <person name="Crossman L.C."/>
            <person name="Blakely G."/>
            <person name="Abratt V."/>
            <person name="Lennard N."/>
            <person name="Poxton I."/>
            <person name="Duerden B."/>
            <person name="Harris B."/>
            <person name="Quail M.A."/>
            <person name="Barron A."/>
            <person name="Clark L."/>
            <person name="Corton C."/>
            <person name="Doggett J."/>
            <person name="Holden M.T.G."/>
            <person name="Larke N."/>
            <person name="Line A."/>
            <person name="Lord A."/>
            <person name="Norbertczak H."/>
            <person name="Ormond D."/>
            <person name="Price C."/>
            <person name="Rabbinowitsch E."/>
            <person name="Woodward J."/>
            <person name="Barrell B.G."/>
            <person name="Parkhill J."/>
        </authorList>
    </citation>
    <scope>NUCLEOTIDE SEQUENCE [LARGE SCALE GENOMIC DNA]</scope>
    <source>
        <strain>ATCC 25285 / DSM 2151 / CCUG 4856 / JCM 11019 / LMG 10263 / NCTC 9343 / Onslow / VPI 2553 / EN-2</strain>
    </source>
</reference>
<proteinExistence type="inferred from homology"/>
<gene>
    <name evidence="1" type="primary">nfo</name>
    <name type="ordered locus">BF1191</name>
</gene>